<dbReference type="EMBL" id="CU928145">
    <property type="protein sequence ID" value="CAU97858.1"/>
    <property type="molecule type" value="Genomic_DNA"/>
</dbReference>
<dbReference type="RefSeq" id="WP_000714550.1">
    <property type="nucleotide sequence ID" value="NC_011748.1"/>
</dbReference>
<dbReference type="SMR" id="B7L6V5"/>
<dbReference type="GeneID" id="93776075"/>
<dbReference type="KEGG" id="eck:EC55989_2000"/>
<dbReference type="HOGENOM" id="CLU_208030_1_0_6"/>
<dbReference type="Proteomes" id="UP000000746">
    <property type="component" value="Chromosome"/>
</dbReference>
<dbReference type="GO" id="GO:0005886">
    <property type="term" value="C:plasma membrane"/>
    <property type="evidence" value="ECO:0007669"/>
    <property type="project" value="UniProtKB-SubCell"/>
</dbReference>
<dbReference type="GO" id="GO:0070298">
    <property type="term" value="P:negative regulation of phosphorelay signal transduction system"/>
    <property type="evidence" value="ECO:0007669"/>
    <property type="project" value="UniProtKB-UniRule"/>
</dbReference>
<dbReference type="HAMAP" id="MF_01596">
    <property type="entry name" value="MgrB"/>
    <property type="match status" value="1"/>
</dbReference>
<dbReference type="InterPro" id="IPR020907">
    <property type="entry name" value="MgrB"/>
</dbReference>
<dbReference type="NCBIfam" id="NF007635">
    <property type="entry name" value="PRK10299.1"/>
    <property type="match status" value="1"/>
</dbReference>
<dbReference type="Pfam" id="PF13998">
    <property type="entry name" value="MgrB"/>
    <property type="match status" value="1"/>
</dbReference>
<dbReference type="PROSITE" id="PS51257">
    <property type="entry name" value="PROKAR_LIPOPROTEIN"/>
    <property type="match status" value="1"/>
</dbReference>
<keyword id="KW-0997">Cell inner membrane</keyword>
<keyword id="KW-1003">Cell membrane</keyword>
<keyword id="KW-0472">Membrane</keyword>
<keyword id="KW-1185">Reference proteome</keyword>
<keyword id="KW-0812">Transmembrane</keyword>
<keyword id="KW-1133">Transmembrane helix</keyword>
<gene>
    <name evidence="1" type="primary">mgrB</name>
    <name type="ordered locus">EC55989_2000</name>
</gene>
<reference key="1">
    <citation type="journal article" date="2009" name="PLoS Genet.">
        <title>Organised genome dynamics in the Escherichia coli species results in highly diverse adaptive paths.</title>
        <authorList>
            <person name="Touchon M."/>
            <person name="Hoede C."/>
            <person name="Tenaillon O."/>
            <person name="Barbe V."/>
            <person name="Baeriswyl S."/>
            <person name="Bidet P."/>
            <person name="Bingen E."/>
            <person name="Bonacorsi S."/>
            <person name="Bouchier C."/>
            <person name="Bouvet O."/>
            <person name="Calteau A."/>
            <person name="Chiapello H."/>
            <person name="Clermont O."/>
            <person name="Cruveiller S."/>
            <person name="Danchin A."/>
            <person name="Diard M."/>
            <person name="Dossat C."/>
            <person name="Karoui M.E."/>
            <person name="Frapy E."/>
            <person name="Garry L."/>
            <person name="Ghigo J.M."/>
            <person name="Gilles A.M."/>
            <person name="Johnson J."/>
            <person name="Le Bouguenec C."/>
            <person name="Lescat M."/>
            <person name="Mangenot S."/>
            <person name="Martinez-Jehanne V."/>
            <person name="Matic I."/>
            <person name="Nassif X."/>
            <person name="Oztas S."/>
            <person name="Petit M.A."/>
            <person name="Pichon C."/>
            <person name="Rouy Z."/>
            <person name="Ruf C.S."/>
            <person name="Schneider D."/>
            <person name="Tourret J."/>
            <person name="Vacherie B."/>
            <person name="Vallenet D."/>
            <person name="Medigue C."/>
            <person name="Rocha E.P.C."/>
            <person name="Denamur E."/>
        </authorList>
    </citation>
    <scope>NUCLEOTIDE SEQUENCE [LARGE SCALE GENOMIC DNA]</scope>
    <source>
        <strain>55989 / EAEC</strain>
    </source>
</reference>
<proteinExistence type="inferred from homology"/>
<sequence>MKKFRWVVLVVVVLACLLLWAQVFNMMCDQDVQFFSGICAINQFIPW</sequence>
<protein>
    <recommendedName>
        <fullName evidence="1">PhoP/PhoQ regulator MgrB</fullName>
    </recommendedName>
</protein>
<accession>B7L6V5</accession>
<comment type="function">
    <text evidence="1">PhoP-regulated transcription is redox-sensitive, being activated when the periplasm becomes more reducing. MgrB acts between DsbA/DsbB and PhoP/PhoQ in this pathway. Represses PhoP/PhoQ signaling, possibly by binding to the periplasmic domain of PhoQ, altering its activity and that of downstream effector PhoP.</text>
</comment>
<comment type="subunit">
    <text evidence="1">May form homooligomers. Probably interacts with the periplasmic domain of PhoQ.</text>
</comment>
<comment type="subcellular location">
    <subcellularLocation>
        <location evidence="1">Cell inner membrane</location>
        <topology evidence="1">Single-pass membrane protein</topology>
    </subcellularLocation>
</comment>
<comment type="similarity">
    <text evidence="1">Belongs to the MgrB family.</text>
</comment>
<feature type="chain" id="PRO_1000185765" description="PhoP/PhoQ regulator MgrB">
    <location>
        <begin position="1"/>
        <end position="47"/>
    </location>
</feature>
<feature type="transmembrane region" description="Helical" evidence="1">
    <location>
        <begin position="6"/>
        <end position="26"/>
    </location>
</feature>
<name>MGRB_ECO55</name>
<evidence type="ECO:0000255" key="1">
    <source>
        <dbReference type="HAMAP-Rule" id="MF_01596"/>
    </source>
</evidence>
<organism>
    <name type="scientific">Escherichia coli (strain 55989 / EAEC)</name>
    <dbReference type="NCBI Taxonomy" id="585055"/>
    <lineage>
        <taxon>Bacteria</taxon>
        <taxon>Pseudomonadati</taxon>
        <taxon>Pseudomonadota</taxon>
        <taxon>Gammaproteobacteria</taxon>
        <taxon>Enterobacterales</taxon>
        <taxon>Enterobacteriaceae</taxon>
        <taxon>Escherichia</taxon>
    </lineage>
</organism>